<dbReference type="EC" id="6.1.1.5" evidence="1"/>
<dbReference type="EMBL" id="BX936398">
    <property type="protein sequence ID" value="CAH19857.1"/>
    <property type="molecule type" value="Genomic_DNA"/>
</dbReference>
<dbReference type="RefSeq" id="WP_002210509.1">
    <property type="nucleotide sequence ID" value="NZ_CP009712.1"/>
</dbReference>
<dbReference type="SMR" id="Q66ES4"/>
<dbReference type="GeneID" id="57974135"/>
<dbReference type="KEGG" id="ypo:BZ17_1939"/>
<dbReference type="KEGG" id="yps:YPTB0617"/>
<dbReference type="PATRIC" id="fig|273123.14.peg.2062"/>
<dbReference type="Proteomes" id="UP000001011">
    <property type="component" value="Chromosome"/>
</dbReference>
<dbReference type="GO" id="GO:0005829">
    <property type="term" value="C:cytosol"/>
    <property type="evidence" value="ECO:0007669"/>
    <property type="project" value="TreeGrafter"/>
</dbReference>
<dbReference type="GO" id="GO:0002161">
    <property type="term" value="F:aminoacyl-tRNA deacylase activity"/>
    <property type="evidence" value="ECO:0007669"/>
    <property type="project" value="InterPro"/>
</dbReference>
<dbReference type="GO" id="GO:0005524">
    <property type="term" value="F:ATP binding"/>
    <property type="evidence" value="ECO:0007669"/>
    <property type="project" value="UniProtKB-UniRule"/>
</dbReference>
<dbReference type="GO" id="GO:0004822">
    <property type="term" value="F:isoleucine-tRNA ligase activity"/>
    <property type="evidence" value="ECO:0007669"/>
    <property type="project" value="UniProtKB-UniRule"/>
</dbReference>
<dbReference type="GO" id="GO:0000049">
    <property type="term" value="F:tRNA binding"/>
    <property type="evidence" value="ECO:0007669"/>
    <property type="project" value="InterPro"/>
</dbReference>
<dbReference type="GO" id="GO:0008270">
    <property type="term" value="F:zinc ion binding"/>
    <property type="evidence" value="ECO:0007669"/>
    <property type="project" value="UniProtKB-UniRule"/>
</dbReference>
<dbReference type="GO" id="GO:0006428">
    <property type="term" value="P:isoleucyl-tRNA aminoacylation"/>
    <property type="evidence" value="ECO:0007669"/>
    <property type="project" value="UniProtKB-UniRule"/>
</dbReference>
<dbReference type="CDD" id="cd07960">
    <property type="entry name" value="Anticodon_Ia_Ile_BEm"/>
    <property type="match status" value="1"/>
</dbReference>
<dbReference type="CDD" id="cd00818">
    <property type="entry name" value="IleRS_core"/>
    <property type="match status" value="1"/>
</dbReference>
<dbReference type="FunFam" id="1.10.730.20:FF:000001">
    <property type="entry name" value="Isoleucine--tRNA ligase"/>
    <property type="match status" value="1"/>
</dbReference>
<dbReference type="FunFam" id="3.40.50.620:FF:000042">
    <property type="entry name" value="Isoleucine--tRNA ligase"/>
    <property type="match status" value="1"/>
</dbReference>
<dbReference type="FunFam" id="3.40.50.620:FF:000048">
    <property type="entry name" value="Isoleucine--tRNA ligase"/>
    <property type="match status" value="1"/>
</dbReference>
<dbReference type="FunFam" id="3.90.740.10:FF:000002">
    <property type="entry name" value="Isoleucine--tRNA ligase"/>
    <property type="match status" value="1"/>
</dbReference>
<dbReference type="Gene3D" id="1.10.730.20">
    <property type="match status" value="1"/>
</dbReference>
<dbReference type="Gene3D" id="3.40.50.620">
    <property type="entry name" value="HUPs"/>
    <property type="match status" value="2"/>
</dbReference>
<dbReference type="Gene3D" id="3.90.740.10">
    <property type="entry name" value="Valyl/Leucyl/Isoleucyl-tRNA synthetase, editing domain"/>
    <property type="match status" value="1"/>
</dbReference>
<dbReference type="HAMAP" id="MF_02002">
    <property type="entry name" value="Ile_tRNA_synth_type1"/>
    <property type="match status" value="1"/>
</dbReference>
<dbReference type="InterPro" id="IPR001412">
    <property type="entry name" value="aa-tRNA-synth_I_CS"/>
</dbReference>
<dbReference type="InterPro" id="IPR002300">
    <property type="entry name" value="aa-tRNA-synth_Ia"/>
</dbReference>
<dbReference type="InterPro" id="IPR033708">
    <property type="entry name" value="Anticodon_Ile_BEm"/>
</dbReference>
<dbReference type="InterPro" id="IPR002301">
    <property type="entry name" value="Ile-tRNA-ligase"/>
</dbReference>
<dbReference type="InterPro" id="IPR023585">
    <property type="entry name" value="Ile-tRNA-ligase_type1"/>
</dbReference>
<dbReference type="InterPro" id="IPR050081">
    <property type="entry name" value="Ile-tRNA_ligase"/>
</dbReference>
<dbReference type="InterPro" id="IPR013155">
    <property type="entry name" value="M/V/L/I-tRNA-synth_anticd-bd"/>
</dbReference>
<dbReference type="InterPro" id="IPR014729">
    <property type="entry name" value="Rossmann-like_a/b/a_fold"/>
</dbReference>
<dbReference type="InterPro" id="IPR009080">
    <property type="entry name" value="tRNAsynth_Ia_anticodon-bd"/>
</dbReference>
<dbReference type="InterPro" id="IPR009008">
    <property type="entry name" value="Val/Leu/Ile-tRNA-synth_edit"/>
</dbReference>
<dbReference type="InterPro" id="IPR010663">
    <property type="entry name" value="Znf_FPG/IleRS"/>
</dbReference>
<dbReference type="NCBIfam" id="TIGR00392">
    <property type="entry name" value="ileS"/>
    <property type="match status" value="1"/>
</dbReference>
<dbReference type="PANTHER" id="PTHR42765:SF1">
    <property type="entry name" value="ISOLEUCINE--TRNA LIGASE, MITOCHONDRIAL"/>
    <property type="match status" value="1"/>
</dbReference>
<dbReference type="PANTHER" id="PTHR42765">
    <property type="entry name" value="SOLEUCYL-TRNA SYNTHETASE"/>
    <property type="match status" value="1"/>
</dbReference>
<dbReference type="Pfam" id="PF08264">
    <property type="entry name" value="Anticodon_1"/>
    <property type="match status" value="1"/>
</dbReference>
<dbReference type="Pfam" id="PF00133">
    <property type="entry name" value="tRNA-synt_1"/>
    <property type="match status" value="1"/>
</dbReference>
<dbReference type="Pfam" id="PF06827">
    <property type="entry name" value="zf-FPG_IleRS"/>
    <property type="match status" value="1"/>
</dbReference>
<dbReference type="PRINTS" id="PR00984">
    <property type="entry name" value="TRNASYNTHILE"/>
</dbReference>
<dbReference type="SUPFAM" id="SSF47323">
    <property type="entry name" value="Anticodon-binding domain of a subclass of class I aminoacyl-tRNA synthetases"/>
    <property type="match status" value="1"/>
</dbReference>
<dbReference type="SUPFAM" id="SSF52374">
    <property type="entry name" value="Nucleotidylyl transferase"/>
    <property type="match status" value="1"/>
</dbReference>
<dbReference type="SUPFAM" id="SSF50677">
    <property type="entry name" value="ValRS/IleRS/LeuRS editing domain"/>
    <property type="match status" value="1"/>
</dbReference>
<dbReference type="PROSITE" id="PS00178">
    <property type="entry name" value="AA_TRNA_LIGASE_I"/>
    <property type="match status" value="1"/>
</dbReference>
<gene>
    <name evidence="1" type="primary">ileS</name>
    <name type="ordered locus">YPTB0617</name>
</gene>
<comment type="function">
    <text evidence="1">Catalyzes the attachment of isoleucine to tRNA(Ile). As IleRS can inadvertently accommodate and process structurally similar amino acids such as valine, to avoid such errors it has two additional distinct tRNA(Ile)-dependent editing activities. One activity is designated as 'pretransfer' editing and involves the hydrolysis of activated Val-AMP. The other activity is designated 'posttransfer' editing and involves deacylation of mischarged Val-tRNA(Ile).</text>
</comment>
<comment type="catalytic activity">
    <reaction evidence="1">
        <text>tRNA(Ile) + L-isoleucine + ATP = L-isoleucyl-tRNA(Ile) + AMP + diphosphate</text>
        <dbReference type="Rhea" id="RHEA:11060"/>
        <dbReference type="Rhea" id="RHEA-COMP:9666"/>
        <dbReference type="Rhea" id="RHEA-COMP:9695"/>
        <dbReference type="ChEBI" id="CHEBI:30616"/>
        <dbReference type="ChEBI" id="CHEBI:33019"/>
        <dbReference type="ChEBI" id="CHEBI:58045"/>
        <dbReference type="ChEBI" id="CHEBI:78442"/>
        <dbReference type="ChEBI" id="CHEBI:78528"/>
        <dbReference type="ChEBI" id="CHEBI:456215"/>
        <dbReference type="EC" id="6.1.1.5"/>
    </reaction>
</comment>
<comment type="cofactor">
    <cofactor evidence="1">
        <name>Zn(2+)</name>
        <dbReference type="ChEBI" id="CHEBI:29105"/>
    </cofactor>
    <text evidence="1">Binds 1 zinc ion per subunit.</text>
</comment>
<comment type="subunit">
    <text evidence="1">Monomer.</text>
</comment>
<comment type="subcellular location">
    <subcellularLocation>
        <location evidence="1">Cytoplasm</location>
    </subcellularLocation>
</comment>
<comment type="domain">
    <text evidence="1">IleRS has two distinct active sites: one for aminoacylation and one for editing. The misactivated valine is translocated from the active site to the editing site, which sterically excludes the correctly activated isoleucine. The single editing site contains two valyl binding pockets, one specific for each substrate (Val-AMP or Val-tRNA(Ile)).</text>
</comment>
<comment type="similarity">
    <text evidence="1">Belongs to the class-I aminoacyl-tRNA synthetase family. IleS type 1 subfamily.</text>
</comment>
<reference key="1">
    <citation type="journal article" date="2004" name="Proc. Natl. Acad. Sci. U.S.A.">
        <title>Insights into the evolution of Yersinia pestis through whole-genome comparison with Yersinia pseudotuberculosis.</title>
        <authorList>
            <person name="Chain P.S.G."/>
            <person name="Carniel E."/>
            <person name="Larimer F.W."/>
            <person name="Lamerdin J."/>
            <person name="Stoutland P.O."/>
            <person name="Regala W.M."/>
            <person name="Georgescu A.M."/>
            <person name="Vergez L.M."/>
            <person name="Land M.L."/>
            <person name="Motin V.L."/>
            <person name="Brubaker R.R."/>
            <person name="Fowler J."/>
            <person name="Hinnebusch J."/>
            <person name="Marceau M."/>
            <person name="Medigue C."/>
            <person name="Simonet M."/>
            <person name="Chenal-Francisque V."/>
            <person name="Souza B."/>
            <person name="Dacheux D."/>
            <person name="Elliott J.M."/>
            <person name="Derbise A."/>
            <person name="Hauser L.J."/>
            <person name="Garcia E."/>
        </authorList>
    </citation>
    <scope>NUCLEOTIDE SEQUENCE [LARGE SCALE GENOMIC DNA]</scope>
    <source>
        <strain>IP32953</strain>
    </source>
</reference>
<evidence type="ECO:0000255" key="1">
    <source>
        <dbReference type="HAMAP-Rule" id="MF_02002"/>
    </source>
</evidence>
<accession>Q66ES4</accession>
<protein>
    <recommendedName>
        <fullName evidence="1">Isoleucine--tRNA ligase</fullName>
        <ecNumber evidence="1">6.1.1.5</ecNumber>
    </recommendedName>
    <alternativeName>
        <fullName evidence="1">Isoleucyl-tRNA synthetase</fullName>
        <shortName evidence="1">IleRS</shortName>
    </alternativeName>
</protein>
<proteinExistence type="inferred from homology"/>
<organism>
    <name type="scientific">Yersinia pseudotuberculosis serotype I (strain IP32953)</name>
    <dbReference type="NCBI Taxonomy" id="273123"/>
    <lineage>
        <taxon>Bacteria</taxon>
        <taxon>Pseudomonadati</taxon>
        <taxon>Pseudomonadota</taxon>
        <taxon>Gammaproteobacteria</taxon>
        <taxon>Enterobacterales</taxon>
        <taxon>Yersiniaceae</taxon>
        <taxon>Yersinia</taxon>
    </lineage>
</organism>
<keyword id="KW-0030">Aminoacyl-tRNA synthetase</keyword>
<keyword id="KW-0067">ATP-binding</keyword>
<keyword id="KW-0963">Cytoplasm</keyword>
<keyword id="KW-0436">Ligase</keyword>
<keyword id="KW-0479">Metal-binding</keyword>
<keyword id="KW-0547">Nucleotide-binding</keyword>
<keyword id="KW-0648">Protein biosynthesis</keyword>
<keyword id="KW-0862">Zinc</keyword>
<name>SYI_YERPS</name>
<feature type="chain" id="PRO_0000098512" description="Isoleucine--tRNA ligase">
    <location>
        <begin position="1"/>
        <end position="938"/>
    </location>
</feature>
<feature type="short sequence motif" description="'HIGH' region">
    <location>
        <begin position="58"/>
        <end position="68"/>
    </location>
</feature>
<feature type="short sequence motif" description="'KMSKS' region">
    <location>
        <begin position="602"/>
        <end position="606"/>
    </location>
</feature>
<feature type="binding site" evidence="1">
    <location>
        <position position="561"/>
    </location>
    <ligand>
        <name>L-isoleucyl-5'-AMP</name>
        <dbReference type="ChEBI" id="CHEBI:178002"/>
    </ligand>
</feature>
<feature type="binding site" evidence="1">
    <location>
        <position position="605"/>
    </location>
    <ligand>
        <name>ATP</name>
        <dbReference type="ChEBI" id="CHEBI:30616"/>
    </ligand>
</feature>
<feature type="binding site" evidence="1">
    <location>
        <position position="901"/>
    </location>
    <ligand>
        <name>Zn(2+)</name>
        <dbReference type="ChEBI" id="CHEBI:29105"/>
    </ligand>
</feature>
<feature type="binding site" evidence="1">
    <location>
        <position position="904"/>
    </location>
    <ligand>
        <name>Zn(2+)</name>
        <dbReference type="ChEBI" id="CHEBI:29105"/>
    </ligand>
</feature>
<feature type="binding site" evidence="1">
    <location>
        <position position="921"/>
    </location>
    <ligand>
        <name>Zn(2+)</name>
        <dbReference type="ChEBI" id="CHEBI:29105"/>
    </ligand>
</feature>
<feature type="binding site" evidence="1">
    <location>
        <position position="924"/>
    </location>
    <ligand>
        <name>Zn(2+)</name>
        <dbReference type="ChEBI" id="CHEBI:29105"/>
    </ligand>
</feature>
<sequence>MSDYKNTLNLPETGFPMRGDLAKREPDMLKRWYEQDLYGIIRAAKKGKKTFILHDGPPYANGNIHIGHSVNKILKDIIVKSKGMAGYDSPYIPGWDCHGLPIELKVEQLIGKPGEKVSAAEFRTACRKYAAEQVEGQKKDFIRLGVLGDWDHPYLTMDFKTEANIIRALSKIIDNGHLHKGAKPVHWCTDCGSSLAEAEVEYYDKTSQSIDVRFNAVDTATVAAKFGVSAVNGPISLVIWTTTPWTLPANRAISLNAEYLYQLVQVEGECLILAADLVESVMKRAGITQWAVLGSCTGSDLELLRFTHPFMGFDVPAILGDHVTLDAGTGAVHTAPGHGPDDFVIGQKYGLEVANPVGPNGCYLAGTYPTLDGLFVFKANDVVVELLREKGALLHVEKLLHSYPCCWRHKTPIIFRATPQWFISMDQKGLRKQSLQEIKGVQWIPDWGQARIETMVANRPDWCISRQRTWGVPMSLFVHKETEQLHPRSIELMEEVAKRVEQDGIQAWWDLDPAEILGADAADYVKVPDTLDVWFDSGSTHSSVVDVRPEFGGHSPDMYLEGSDQHRGWFMSSLMIATAMKGKAPYRQVLTHGFTVDGQGRKMSKSIGNTISPQDVMNKLGGDILRLWVASTDYTGEIAVSDEILKRSADSYRRIRNTARFLLANLNGFDPAQHQVKPEEMVVVDRWAVGRAQAAQAEIMEAYENYDFHLVVQRLMQFCSVEMGSFYLDIIKDRQYTAKGDGIARRSCQTALFHIAEALVRWMAPIMSFTADEIWNHLPGERQQYVFTEEWYDGLFGLAGNESMNDTFWAELLKVRGEVNKVLEQARSDKRIGGSLEAAVTLYAEPELAARLNSLQDELRFVLLTSAAKVAAYADAGNDAQQSELIAGLKITFNKADGEKCPRCWHYTQDVGLVAEHAELCGRCVTNVAGDGEERKFA</sequence>